<keyword id="KW-0240">DNA-directed RNA polymerase</keyword>
<keyword id="KW-0548">Nucleotidyltransferase</keyword>
<keyword id="KW-0804">Transcription</keyword>
<keyword id="KW-0808">Transferase</keyword>
<gene>
    <name evidence="1" type="primary">rpoY</name>
    <name type="ordered locus">LGAS_1183</name>
</gene>
<feature type="chain" id="PRO_1000068870" description="DNA-directed RNA polymerase subunit epsilon">
    <location>
        <begin position="1"/>
        <end position="75"/>
    </location>
</feature>
<dbReference type="EC" id="2.7.7.6" evidence="1"/>
<dbReference type="EMBL" id="CP000413">
    <property type="protein sequence ID" value="ABJ60552.1"/>
    <property type="molecule type" value="Genomic_DNA"/>
</dbReference>
<dbReference type="RefSeq" id="WP_003647122.1">
    <property type="nucleotide sequence ID" value="NZ_WBMG01000002.1"/>
</dbReference>
<dbReference type="SMR" id="Q042S0"/>
<dbReference type="KEGG" id="lga:LGAS_1183"/>
<dbReference type="HOGENOM" id="CLU_187518_0_0_9"/>
<dbReference type="BioCyc" id="LGAS324831:G1G6Y-1179-MONOMER"/>
<dbReference type="Proteomes" id="UP000000664">
    <property type="component" value="Chromosome"/>
</dbReference>
<dbReference type="GO" id="GO:0000428">
    <property type="term" value="C:DNA-directed RNA polymerase complex"/>
    <property type="evidence" value="ECO:0007669"/>
    <property type="project" value="UniProtKB-KW"/>
</dbReference>
<dbReference type="GO" id="GO:0003677">
    <property type="term" value="F:DNA binding"/>
    <property type="evidence" value="ECO:0007669"/>
    <property type="project" value="UniProtKB-UniRule"/>
</dbReference>
<dbReference type="GO" id="GO:0003899">
    <property type="term" value="F:DNA-directed RNA polymerase activity"/>
    <property type="evidence" value="ECO:0007669"/>
    <property type="project" value="UniProtKB-UniRule"/>
</dbReference>
<dbReference type="GO" id="GO:0006351">
    <property type="term" value="P:DNA-templated transcription"/>
    <property type="evidence" value="ECO:0007669"/>
    <property type="project" value="UniProtKB-UniRule"/>
</dbReference>
<dbReference type="Gene3D" id="3.10.20.730">
    <property type="entry name" value="RNAP, epsilon subunit-like"/>
    <property type="match status" value="1"/>
</dbReference>
<dbReference type="HAMAP" id="MF_01553">
    <property type="entry name" value="RNApol_bact_RpoY"/>
    <property type="match status" value="1"/>
</dbReference>
<dbReference type="InterPro" id="IPR009907">
    <property type="entry name" value="RpoY"/>
</dbReference>
<dbReference type="NCBIfam" id="NF010188">
    <property type="entry name" value="PRK13667.1"/>
    <property type="match status" value="1"/>
</dbReference>
<dbReference type="Pfam" id="PF07288">
    <property type="entry name" value="RpoY"/>
    <property type="match status" value="1"/>
</dbReference>
<accession>Q042S0</accession>
<comment type="function">
    <text evidence="1">A non-essential component of RNA polymerase (RNAP).</text>
</comment>
<comment type="catalytic activity">
    <reaction evidence="1">
        <text>RNA(n) + a ribonucleoside 5'-triphosphate = RNA(n+1) + diphosphate</text>
        <dbReference type="Rhea" id="RHEA:21248"/>
        <dbReference type="Rhea" id="RHEA-COMP:14527"/>
        <dbReference type="Rhea" id="RHEA-COMP:17342"/>
        <dbReference type="ChEBI" id="CHEBI:33019"/>
        <dbReference type="ChEBI" id="CHEBI:61557"/>
        <dbReference type="ChEBI" id="CHEBI:140395"/>
        <dbReference type="EC" id="2.7.7.6"/>
    </reaction>
</comment>
<comment type="subunit">
    <text evidence="1">RNAP is composed of a core of 2 alpha, a beta and a beta' subunit. The core is associated with a delta subunit, and at least one of epsilon or omega. When a sigma factor is associated with the core the holoenzyme is formed, which can initiate transcription.</text>
</comment>
<comment type="similarity">
    <text evidence="1">Belongs to the RNA polymerase subunit epsilon family.</text>
</comment>
<sequence length="75" mass="8773">MIYKVLYQKDQIVNPRRETTKTLFLEADNVVAARTMVEDNTPYNIELIQELTGNSLAYEKQNPDFKLTTFKSEDK</sequence>
<organism>
    <name type="scientific">Lactobacillus gasseri (strain ATCC 33323 / DSM 20243 / BCRC 14619 / CIP 102991 / JCM 1131 / KCTC 3163 / NCIMB 11718 / NCTC 13722 / AM63)</name>
    <dbReference type="NCBI Taxonomy" id="324831"/>
    <lineage>
        <taxon>Bacteria</taxon>
        <taxon>Bacillati</taxon>
        <taxon>Bacillota</taxon>
        <taxon>Bacilli</taxon>
        <taxon>Lactobacillales</taxon>
        <taxon>Lactobacillaceae</taxon>
        <taxon>Lactobacillus</taxon>
    </lineage>
</organism>
<proteinExistence type="inferred from homology"/>
<reference key="1">
    <citation type="journal article" date="2006" name="Proc. Natl. Acad. Sci. U.S.A.">
        <title>Comparative genomics of the lactic acid bacteria.</title>
        <authorList>
            <person name="Makarova K.S."/>
            <person name="Slesarev A."/>
            <person name="Wolf Y.I."/>
            <person name="Sorokin A."/>
            <person name="Mirkin B."/>
            <person name="Koonin E.V."/>
            <person name="Pavlov A."/>
            <person name="Pavlova N."/>
            <person name="Karamychev V."/>
            <person name="Polouchine N."/>
            <person name="Shakhova V."/>
            <person name="Grigoriev I."/>
            <person name="Lou Y."/>
            <person name="Rohksar D."/>
            <person name="Lucas S."/>
            <person name="Huang K."/>
            <person name="Goodstein D.M."/>
            <person name="Hawkins T."/>
            <person name="Plengvidhya V."/>
            <person name="Welker D."/>
            <person name="Hughes J."/>
            <person name="Goh Y."/>
            <person name="Benson A."/>
            <person name="Baldwin K."/>
            <person name="Lee J.-H."/>
            <person name="Diaz-Muniz I."/>
            <person name="Dosti B."/>
            <person name="Smeianov V."/>
            <person name="Wechter W."/>
            <person name="Barabote R."/>
            <person name="Lorca G."/>
            <person name="Altermann E."/>
            <person name="Barrangou R."/>
            <person name="Ganesan B."/>
            <person name="Xie Y."/>
            <person name="Rawsthorne H."/>
            <person name="Tamir D."/>
            <person name="Parker C."/>
            <person name="Breidt F."/>
            <person name="Broadbent J.R."/>
            <person name="Hutkins R."/>
            <person name="O'Sullivan D."/>
            <person name="Steele J."/>
            <person name="Unlu G."/>
            <person name="Saier M.H. Jr."/>
            <person name="Klaenhammer T."/>
            <person name="Richardson P."/>
            <person name="Kozyavkin S."/>
            <person name="Weimer B.C."/>
            <person name="Mills D.A."/>
        </authorList>
    </citation>
    <scope>NUCLEOTIDE SEQUENCE [LARGE SCALE GENOMIC DNA]</scope>
    <source>
        <strain>ATCC 33323 / DSM 20243 / BCRC 14619 / CIP 102991 / JCM 1131 / KCTC 3163 / NCIMB 11718 / NCTC 13722 / AM63</strain>
    </source>
</reference>
<evidence type="ECO:0000255" key="1">
    <source>
        <dbReference type="HAMAP-Rule" id="MF_01553"/>
    </source>
</evidence>
<name>RPOY_LACGA</name>
<protein>
    <recommendedName>
        <fullName evidence="1">DNA-directed RNA polymerase subunit epsilon</fullName>
        <shortName evidence="1">RNAP epsilon subunit</shortName>
        <ecNumber evidence="1">2.7.7.6</ecNumber>
    </recommendedName>
    <alternativeName>
        <fullName evidence="1">RNA polymerase epsilon subunit</fullName>
    </alternativeName>
    <alternativeName>
        <fullName evidence="1">Transcriptase subunit epsilon</fullName>
    </alternativeName>
</protein>